<accession>D4AD02</accession>
<accession>D9Z4I7</accession>
<name>CLC9A_RAT</name>
<organism>
    <name type="scientific">Rattus norvegicus</name>
    <name type="common">Rat</name>
    <dbReference type="NCBI Taxonomy" id="10116"/>
    <lineage>
        <taxon>Eukaryota</taxon>
        <taxon>Metazoa</taxon>
        <taxon>Chordata</taxon>
        <taxon>Craniata</taxon>
        <taxon>Vertebrata</taxon>
        <taxon>Euteleostomi</taxon>
        <taxon>Mammalia</taxon>
        <taxon>Eutheria</taxon>
        <taxon>Euarchontoglires</taxon>
        <taxon>Glires</taxon>
        <taxon>Rodentia</taxon>
        <taxon>Myomorpha</taxon>
        <taxon>Muroidea</taxon>
        <taxon>Muridae</taxon>
        <taxon>Murinae</taxon>
        <taxon>Rattus</taxon>
    </lineage>
</organism>
<feature type="chain" id="PRO_0000410724" description="C-type lectin domain family 9 member A">
    <location>
        <begin position="1"/>
        <end position="241"/>
    </location>
</feature>
<feature type="topological domain" description="Cytoplasmic" evidence="2">
    <location>
        <begin position="1"/>
        <end position="34"/>
    </location>
</feature>
<feature type="transmembrane region" description="Helical; Signal-anchor for type II membrane protein" evidence="2">
    <location>
        <begin position="35"/>
        <end position="55"/>
    </location>
</feature>
<feature type="topological domain" description="Extracellular" evidence="2">
    <location>
        <begin position="56"/>
        <end position="241"/>
    </location>
</feature>
<feature type="domain" description="C-type lectin" evidence="3">
    <location>
        <begin position="120"/>
        <end position="233"/>
    </location>
</feature>
<feature type="short sequence motif" description="ITAM-like">
    <location>
        <begin position="5"/>
        <end position="10"/>
    </location>
</feature>
<feature type="glycosylation site" description="N-linked (GlcNAc...) asparagine" evidence="2">
    <location>
        <position position="81"/>
    </location>
</feature>
<feature type="glycosylation site" description="N-linked (GlcNAc...) asparagine" evidence="2">
    <location>
        <position position="88"/>
    </location>
</feature>
<feature type="glycosylation site" description="N-linked (GlcNAc...) asparagine" evidence="2">
    <location>
        <position position="135"/>
    </location>
</feature>
<feature type="glycosylation site" description="N-linked (GlcNAc...) asparagine" evidence="2">
    <location>
        <position position="161"/>
    </location>
</feature>
<feature type="glycosylation site" description="N-linked (GlcNAc...) asparagine" evidence="2">
    <location>
        <position position="223"/>
    </location>
</feature>
<feature type="disulfide bond" evidence="3">
    <location>
        <begin position="113"/>
        <end position="124"/>
    </location>
</feature>
<feature type="disulfide bond" evidence="3">
    <location>
        <begin position="141"/>
        <end position="232"/>
    </location>
</feature>
<feature type="disulfide bond" evidence="3">
    <location>
        <begin position="211"/>
        <end position="224"/>
    </location>
</feature>
<feature type="sequence conflict" description="In Ref. 1; ADK94896." evidence="5" ref="1">
    <location>
        <position position="158"/>
    </location>
</feature>
<reference key="1">
    <citation type="journal article" date="2010" name="Immunogenetics">
        <title>The complete inventory of receptors encoded by the rat natural killer cell gene complex.</title>
        <authorList>
            <person name="Flornes L.M."/>
            <person name="Nylenna O."/>
            <person name="Saether P.C."/>
            <person name="Daws M.R."/>
            <person name="Dissen E."/>
            <person name="Fossum S."/>
        </authorList>
    </citation>
    <scope>NUCLEOTIDE SEQUENCE [MRNA]</scope>
    <scope>TISSUE SPECIFICITY</scope>
    <source>
        <strain>PVG</strain>
    </source>
</reference>
<reference key="2">
    <citation type="journal article" date="2004" name="Nature">
        <title>Genome sequence of the Brown Norway rat yields insights into mammalian evolution.</title>
        <authorList>
            <person name="Gibbs R.A."/>
            <person name="Weinstock G.M."/>
            <person name="Metzker M.L."/>
            <person name="Muzny D.M."/>
            <person name="Sodergren E.J."/>
            <person name="Scherer S."/>
            <person name="Scott G."/>
            <person name="Steffen D."/>
            <person name="Worley K.C."/>
            <person name="Burch P.E."/>
            <person name="Okwuonu G."/>
            <person name="Hines S."/>
            <person name="Lewis L."/>
            <person name="Deramo C."/>
            <person name="Delgado O."/>
            <person name="Dugan-Rocha S."/>
            <person name="Miner G."/>
            <person name="Morgan M."/>
            <person name="Hawes A."/>
            <person name="Gill R."/>
            <person name="Holt R.A."/>
            <person name="Adams M.D."/>
            <person name="Amanatides P.G."/>
            <person name="Baden-Tillson H."/>
            <person name="Barnstead M."/>
            <person name="Chin S."/>
            <person name="Evans C.A."/>
            <person name="Ferriera S."/>
            <person name="Fosler C."/>
            <person name="Glodek A."/>
            <person name="Gu Z."/>
            <person name="Jennings D."/>
            <person name="Kraft C.L."/>
            <person name="Nguyen T."/>
            <person name="Pfannkoch C.M."/>
            <person name="Sitter C."/>
            <person name="Sutton G.G."/>
            <person name="Venter J.C."/>
            <person name="Woodage T."/>
            <person name="Smith D."/>
            <person name="Lee H.-M."/>
            <person name="Gustafson E."/>
            <person name="Cahill P."/>
            <person name="Kana A."/>
            <person name="Doucette-Stamm L."/>
            <person name="Weinstock K."/>
            <person name="Fechtel K."/>
            <person name="Weiss R.B."/>
            <person name="Dunn D.M."/>
            <person name="Green E.D."/>
            <person name="Blakesley R.W."/>
            <person name="Bouffard G.G."/>
            <person name="De Jong P.J."/>
            <person name="Osoegawa K."/>
            <person name="Zhu B."/>
            <person name="Marra M."/>
            <person name="Schein J."/>
            <person name="Bosdet I."/>
            <person name="Fjell C."/>
            <person name="Jones S."/>
            <person name="Krzywinski M."/>
            <person name="Mathewson C."/>
            <person name="Siddiqui A."/>
            <person name="Wye N."/>
            <person name="McPherson J."/>
            <person name="Zhao S."/>
            <person name="Fraser C.M."/>
            <person name="Shetty J."/>
            <person name="Shatsman S."/>
            <person name="Geer K."/>
            <person name="Chen Y."/>
            <person name="Abramzon S."/>
            <person name="Nierman W.C."/>
            <person name="Havlak P.H."/>
            <person name="Chen R."/>
            <person name="Durbin K.J."/>
            <person name="Egan A."/>
            <person name="Ren Y."/>
            <person name="Song X.-Z."/>
            <person name="Li B."/>
            <person name="Liu Y."/>
            <person name="Qin X."/>
            <person name="Cawley S."/>
            <person name="Cooney A.J."/>
            <person name="D'Souza L.M."/>
            <person name="Martin K."/>
            <person name="Wu J.Q."/>
            <person name="Gonzalez-Garay M.L."/>
            <person name="Jackson A.R."/>
            <person name="Kalafus K.J."/>
            <person name="McLeod M.P."/>
            <person name="Milosavljevic A."/>
            <person name="Virk D."/>
            <person name="Volkov A."/>
            <person name="Wheeler D.A."/>
            <person name="Zhang Z."/>
            <person name="Bailey J.A."/>
            <person name="Eichler E.E."/>
            <person name="Tuzun E."/>
            <person name="Birney E."/>
            <person name="Mongin E."/>
            <person name="Ureta-Vidal A."/>
            <person name="Woodwark C."/>
            <person name="Zdobnov E."/>
            <person name="Bork P."/>
            <person name="Suyama M."/>
            <person name="Torrents D."/>
            <person name="Alexandersson M."/>
            <person name="Trask B.J."/>
            <person name="Young J.M."/>
            <person name="Huang H."/>
            <person name="Wang H."/>
            <person name="Xing H."/>
            <person name="Daniels S."/>
            <person name="Gietzen D."/>
            <person name="Schmidt J."/>
            <person name="Stevens K."/>
            <person name="Vitt U."/>
            <person name="Wingrove J."/>
            <person name="Camara F."/>
            <person name="Mar Alba M."/>
            <person name="Abril J.F."/>
            <person name="Guigo R."/>
            <person name="Smit A."/>
            <person name="Dubchak I."/>
            <person name="Rubin E.M."/>
            <person name="Couronne O."/>
            <person name="Poliakov A."/>
            <person name="Huebner N."/>
            <person name="Ganten D."/>
            <person name="Goesele C."/>
            <person name="Hummel O."/>
            <person name="Kreitler T."/>
            <person name="Lee Y.-A."/>
            <person name="Monti J."/>
            <person name="Schulz H."/>
            <person name="Zimdahl H."/>
            <person name="Himmelbauer H."/>
            <person name="Lehrach H."/>
            <person name="Jacob H.J."/>
            <person name="Bromberg S."/>
            <person name="Gullings-Handley J."/>
            <person name="Jensen-Seaman M.I."/>
            <person name="Kwitek A.E."/>
            <person name="Lazar J."/>
            <person name="Pasko D."/>
            <person name="Tonellato P.J."/>
            <person name="Twigger S."/>
            <person name="Ponting C.P."/>
            <person name="Duarte J.M."/>
            <person name="Rice S."/>
            <person name="Goodstadt L."/>
            <person name="Beatson S.A."/>
            <person name="Emes R.D."/>
            <person name="Winter E.E."/>
            <person name="Webber C."/>
            <person name="Brandt P."/>
            <person name="Nyakatura G."/>
            <person name="Adetobi M."/>
            <person name="Chiaromonte F."/>
            <person name="Elnitski L."/>
            <person name="Eswara P."/>
            <person name="Hardison R.C."/>
            <person name="Hou M."/>
            <person name="Kolbe D."/>
            <person name="Makova K."/>
            <person name="Miller W."/>
            <person name="Nekrutenko A."/>
            <person name="Riemer C."/>
            <person name="Schwartz S."/>
            <person name="Taylor J."/>
            <person name="Yang S."/>
            <person name="Zhang Y."/>
            <person name="Lindpaintner K."/>
            <person name="Andrews T.D."/>
            <person name="Caccamo M."/>
            <person name="Clamp M."/>
            <person name="Clarke L."/>
            <person name="Curwen V."/>
            <person name="Durbin R.M."/>
            <person name="Eyras E."/>
            <person name="Searle S.M."/>
            <person name="Cooper G.M."/>
            <person name="Batzoglou S."/>
            <person name="Brudno M."/>
            <person name="Sidow A."/>
            <person name="Stone E.A."/>
            <person name="Payseur B.A."/>
            <person name="Bourque G."/>
            <person name="Lopez-Otin C."/>
            <person name="Puente X.S."/>
            <person name="Chakrabarti K."/>
            <person name="Chatterji S."/>
            <person name="Dewey C."/>
            <person name="Pachter L."/>
            <person name="Bray N."/>
            <person name="Yap V.B."/>
            <person name="Caspi A."/>
            <person name="Tesler G."/>
            <person name="Pevzner P.A."/>
            <person name="Haussler D."/>
            <person name="Roskin K.M."/>
            <person name="Baertsch R."/>
            <person name="Clawson H."/>
            <person name="Furey T.S."/>
            <person name="Hinrichs A.S."/>
            <person name="Karolchik D."/>
            <person name="Kent W.J."/>
            <person name="Rosenbloom K.R."/>
            <person name="Trumbower H."/>
            <person name="Weirauch M."/>
            <person name="Cooper D.N."/>
            <person name="Stenson P.D."/>
            <person name="Ma B."/>
            <person name="Brent M."/>
            <person name="Arumugam M."/>
            <person name="Shteynberg D."/>
            <person name="Copley R.R."/>
            <person name="Taylor M.S."/>
            <person name="Riethman H."/>
            <person name="Mudunuri U."/>
            <person name="Peterson J."/>
            <person name="Guyer M."/>
            <person name="Felsenfeld A."/>
            <person name="Old S."/>
            <person name="Mockrin S."/>
            <person name="Collins F.S."/>
        </authorList>
    </citation>
    <scope>NUCLEOTIDE SEQUENCE [LARGE SCALE GENOMIC DNA]</scope>
    <source>
        <strain>Brown Norway</strain>
    </source>
</reference>
<reference key="3">
    <citation type="submission" date="2005-09" db="EMBL/GenBank/DDBJ databases">
        <authorList>
            <person name="Mural R.J."/>
            <person name="Adams M.D."/>
            <person name="Myers E.W."/>
            <person name="Smith H.O."/>
            <person name="Venter J.C."/>
        </authorList>
    </citation>
    <scope>NUCLEOTIDE SEQUENCE [LARGE SCALE GENOMIC DNA]</scope>
    <source>
        <strain>Brown Norway</strain>
    </source>
</reference>
<evidence type="ECO:0000250" key="1"/>
<evidence type="ECO:0000255" key="2"/>
<evidence type="ECO:0000255" key="3">
    <source>
        <dbReference type="PROSITE-ProRule" id="PRU00040"/>
    </source>
</evidence>
<evidence type="ECO:0000269" key="4">
    <source>
    </source>
</evidence>
<evidence type="ECO:0000305" key="5"/>
<protein>
    <recommendedName>
        <fullName>C-type lectin domain family 9 member A</fullName>
    </recommendedName>
    <cdAntigenName>CD370</cdAntigenName>
</protein>
<sequence length="241" mass="27429">MHEEEIYTSLQWDIPTSEASQKCPSLSKCPGTWCIVTVISCVVCVGLLAASIFLGIKFSQVSSLVMEQRERLIRQDTALLNLTEWQRNHTLQLKSCQASLQRSLRSGSNCNPCPPNWIQNGKSCYYAFDRWETWNNSKKSCLKEGDSLLQIDSKEEMEFINLSIWKLKGGYEYWVGVFQDGPSGSWFWEDGSSPLSDLLPTDRQLSASQICGYLKDHTLISDNCSNWKYFICEKKAFGSCI</sequence>
<gene>
    <name type="primary">Clec9a</name>
</gene>
<proteinExistence type="evidence at transcript level"/>
<dbReference type="EMBL" id="GU357486">
    <property type="protein sequence ID" value="ADK94896.1"/>
    <property type="molecule type" value="mRNA"/>
</dbReference>
<dbReference type="EMBL" id="AABR03033287">
    <property type="status" value="NOT_ANNOTATED_CDS"/>
    <property type="molecule type" value="Genomic_DNA"/>
</dbReference>
<dbReference type="EMBL" id="CH473964">
    <property type="protein sequence ID" value="EDM01742.1"/>
    <property type="molecule type" value="Genomic_DNA"/>
</dbReference>
<dbReference type="RefSeq" id="NP_001102824.1">
    <property type="nucleotide sequence ID" value="NM_001109354.1"/>
</dbReference>
<dbReference type="SMR" id="D4AD02"/>
<dbReference type="FunCoup" id="D4AD02">
    <property type="interactions" value="6"/>
</dbReference>
<dbReference type="STRING" id="10116.ENSRNOP00000071858"/>
<dbReference type="GlyCosmos" id="D4AD02">
    <property type="glycosylation" value="5 sites, No reported glycans"/>
</dbReference>
<dbReference type="GlyGen" id="D4AD02">
    <property type="glycosylation" value="5 sites"/>
</dbReference>
<dbReference type="PhosphoSitePlus" id="D4AD02"/>
<dbReference type="PaxDb" id="10116-ENSRNOP00000052698"/>
<dbReference type="Ensembl" id="ENSRNOT00000088108.2">
    <property type="protein sequence ID" value="ENSRNOP00000071858.1"/>
    <property type="gene ID" value="ENSRNOG00000051690.2"/>
</dbReference>
<dbReference type="GeneID" id="502901"/>
<dbReference type="KEGG" id="rno:502901"/>
<dbReference type="UCSC" id="RGD:1562513">
    <property type="organism name" value="rat"/>
</dbReference>
<dbReference type="AGR" id="RGD:1562513"/>
<dbReference type="CTD" id="283420"/>
<dbReference type="RGD" id="1562513">
    <property type="gene designation" value="Clec9a"/>
</dbReference>
<dbReference type="eggNOG" id="KOG4297">
    <property type="taxonomic scope" value="Eukaryota"/>
</dbReference>
<dbReference type="GeneTree" id="ENSGT00940000161796"/>
<dbReference type="HOGENOM" id="CLU_049894_9_0_1"/>
<dbReference type="InParanoid" id="D4AD02"/>
<dbReference type="OMA" id="WDSPAPN"/>
<dbReference type="OrthoDB" id="6337382at2759"/>
<dbReference type="PhylomeDB" id="D4AD02"/>
<dbReference type="TreeFam" id="TF336674"/>
<dbReference type="PRO" id="PR:D4AD02"/>
<dbReference type="Proteomes" id="UP000002494">
    <property type="component" value="Chromosome 4"/>
</dbReference>
<dbReference type="Proteomes" id="UP000234681">
    <property type="component" value="Chromosome 4"/>
</dbReference>
<dbReference type="Bgee" id="ENSRNOG00000051690">
    <property type="expression patterns" value="Expressed in spleen and 16 other cell types or tissues"/>
</dbReference>
<dbReference type="GO" id="GO:0009986">
    <property type="term" value="C:cell surface"/>
    <property type="evidence" value="ECO:0000250"/>
    <property type="project" value="UniProtKB"/>
</dbReference>
<dbReference type="GO" id="GO:0016020">
    <property type="term" value="C:membrane"/>
    <property type="evidence" value="ECO:0007669"/>
    <property type="project" value="UniProtKB-SubCell"/>
</dbReference>
<dbReference type="GO" id="GO:0030246">
    <property type="term" value="F:carbohydrate binding"/>
    <property type="evidence" value="ECO:0007669"/>
    <property type="project" value="UniProtKB-KW"/>
</dbReference>
<dbReference type="GO" id="GO:0001819">
    <property type="term" value="P:positive regulation of cytokine production"/>
    <property type="evidence" value="ECO:0000250"/>
    <property type="project" value="UniProtKB"/>
</dbReference>
<dbReference type="GO" id="GO:0006898">
    <property type="term" value="P:receptor-mediated endocytosis"/>
    <property type="evidence" value="ECO:0000250"/>
    <property type="project" value="UniProtKB"/>
</dbReference>
<dbReference type="CDD" id="cd03593">
    <property type="entry name" value="CLECT_NK_receptors_like"/>
    <property type="match status" value="1"/>
</dbReference>
<dbReference type="FunFam" id="3.10.100.10:FF:000075">
    <property type="entry name" value="C-type lectin domain family 9 member A"/>
    <property type="match status" value="1"/>
</dbReference>
<dbReference type="Gene3D" id="3.10.100.10">
    <property type="entry name" value="Mannose-Binding Protein A, subunit A"/>
    <property type="match status" value="1"/>
</dbReference>
<dbReference type="InterPro" id="IPR001304">
    <property type="entry name" value="C-type_lectin-like"/>
</dbReference>
<dbReference type="InterPro" id="IPR016186">
    <property type="entry name" value="C-type_lectin-like/link_sf"/>
</dbReference>
<dbReference type="InterPro" id="IPR043315">
    <property type="entry name" value="CLEC9A"/>
</dbReference>
<dbReference type="InterPro" id="IPR016187">
    <property type="entry name" value="CTDL_fold"/>
</dbReference>
<dbReference type="InterPro" id="IPR033992">
    <property type="entry name" value="NKR-like_CTLD"/>
</dbReference>
<dbReference type="PANTHER" id="PTHR47727">
    <property type="entry name" value="C-TYPE LECTIN DOMAIN FAMILY 9 MEMBER A"/>
    <property type="match status" value="1"/>
</dbReference>
<dbReference type="PANTHER" id="PTHR47727:SF1">
    <property type="entry name" value="C-TYPE LECTIN DOMAIN FAMILY 9 MEMBER A"/>
    <property type="match status" value="1"/>
</dbReference>
<dbReference type="Pfam" id="PF00059">
    <property type="entry name" value="Lectin_C"/>
    <property type="match status" value="1"/>
</dbReference>
<dbReference type="SMART" id="SM00034">
    <property type="entry name" value="CLECT"/>
    <property type="match status" value="1"/>
</dbReference>
<dbReference type="SUPFAM" id="SSF56436">
    <property type="entry name" value="C-type lectin-like"/>
    <property type="match status" value="1"/>
</dbReference>
<dbReference type="PROSITE" id="PS00615">
    <property type="entry name" value="C_TYPE_LECTIN_1"/>
    <property type="match status" value="1"/>
</dbReference>
<dbReference type="PROSITE" id="PS50041">
    <property type="entry name" value="C_TYPE_LECTIN_2"/>
    <property type="match status" value="1"/>
</dbReference>
<keyword id="KW-1015">Disulfide bond</keyword>
<keyword id="KW-0254">Endocytosis</keyword>
<keyword id="KW-0325">Glycoprotein</keyword>
<keyword id="KW-0430">Lectin</keyword>
<keyword id="KW-0472">Membrane</keyword>
<keyword id="KW-0675">Receptor</keyword>
<keyword id="KW-1185">Reference proteome</keyword>
<keyword id="KW-0735">Signal-anchor</keyword>
<keyword id="KW-0812">Transmembrane</keyword>
<keyword id="KW-1133">Transmembrane helix</keyword>
<comment type="function">
    <text evidence="1">Functions as an endocytic receptor on a small subset of myeloid cells specialized for the uptake and processing of material from dead cells. Recognizes filamentous form of actin in association with particular actin-binding domains of cytoskeletal proteins, including spectrin, exposed when cell membranes are damaged, and mediate the cross-presentation of dead-cell associated antigens in a Syk-dependent manner (By similarity).</text>
</comment>
<comment type="subunit">
    <text evidence="1">Homodimer.</text>
</comment>
<comment type="subcellular location">
    <subcellularLocation>
        <location evidence="1">Membrane</location>
        <topology evidence="1">Single-pass type II membrane protein</topology>
    </subcellularLocation>
</comment>
<comment type="tissue specificity">
    <text evidence="4">High expression in the spleen, moderate to low levels in several other tissues and cell types, but no detectable expression in skin dendritic cells or CD4(+) T-cells.</text>
</comment>
<comment type="PTM">
    <text evidence="1">N-glycosylated.</text>
</comment>